<gene>
    <name evidence="1" type="primary">gpsB</name>
    <name type="ordered locus">OB1750</name>
</gene>
<name>GPSB_OCEIH</name>
<organism>
    <name type="scientific">Oceanobacillus iheyensis (strain DSM 14371 / CIP 107618 / JCM 11309 / KCTC 3954 / HTE831)</name>
    <dbReference type="NCBI Taxonomy" id="221109"/>
    <lineage>
        <taxon>Bacteria</taxon>
        <taxon>Bacillati</taxon>
        <taxon>Bacillota</taxon>
        <taxon>Bacilli</taxon>
        <taxon>Bacillales</taxon>
        <taxon>Bacillaceae</taxon>
        <taxon>Oceanobacillus</taxon>
    </lineage>
</organism>
<protein>
    <recommendedName>
        <fullName evidence="1">Cell cycle protein GpsB</fullName>
    </recommendedName>
    <alternativeName>
        <fullName evidence="1">Guiding PBP1-shuttling protein</fullName>
    </alternativeName>
</protein>
<dbReference type="EMBL" id="BA000028">
    <property type="protein sequence ID" value="BAC13706.1"/>
    <property type="molecule type" value="Genomic_DNA"/>
</dbReference>
<dbReference type="RefSeq" id="WP_011066149.1">
    <property type="nucleotide sequence ID" value="NC_004193.1"/>
</dbReference>
<dbReference type="SMR" id="Q8EQF0"/>
<dbReference type="STRING" id="221109.gene:10733990"/>
<dbReference type="KEGG" id="oih:OB1750"/>
<dbReference type="eggNOG" id="COG3599">
    <property type="taxonomic scope" value="Bacteria"/>
</dbReference>
<dbReference type="HOGENOM" id="CLU_140309_1_0_9"/>
<dbReference type="OrthoDB" id="389699at2"/>
<dbReference type="PhylomeDB" id="Q8EQF0"/>
<dbReference type="Proteomes" id="UP000000822">
    <property type="component" value="Chromosome"/>
</dbReference>
<dbReference type="GO" id="GO:0005737">
    <property type="term" value="C:cytoplasm"/>
    <property type="evidence" value="ECO:0007669"/>
    <property type="project" value="UniProtKB-SubCell"/>
</dbReference>
<dbReference type="GO" id="GO:0051301">
    <property type="term" value="P:cell division"/>
    <property type="evidence" value="ECO:0007669"/>
    <property type="project" value="UniProtKB-UniRule"/>
</dbReference>
<dbReference type="GO" id="GO:0008360">
    <property type="term" value="P:regulation of cell shape"/>
    <property type="evidence" value="ECO:0007669"/>
    <property type="project" value="UniProtKB-UniRule"/>
</dbReference>
<dbReference type="Gene3D" id="6.10.250.660">
    <property type="match status" value="1"/>
</dbReference>
<dbReference type="HAMAP" id="MF_02011">
    <property type="entry name" value="GpsB"/>
    <property type="match status" value="1"/>
</dbReference>
<dbReference type="InterPro" id="IPR011229">
    <property type="entry name" value="Cell_cycle_GpsB"/>
</dbReference>
<dbReference type="InterPro" id="IPR019933">
    <property type="entry name" value="DivIVA_domain"/>
</dbReference>
<dbReference type="InterPro" id="IPR007793">
    <property type="entry name" value="DivIVA_fam"/>
</dbReference>
<dbReference type="NCBIfam" id="TIGR03544">
    <property type="entry name" value="DivI1A_domain"/>
    <property type="match status" value="1"/>
</dbReference>
<dbReference type="NCBIfam" id="NF010725">
    <property type="entry name" value="PRK14127.1"/>
    <property type="match status" value="1"/>
</dbReference>
<dbReference type="PANTHER" id="PTHR35794:SF1">
    <property type="entry name" value="CELL CYCLE PROTEIN GPSB"/>
    <property type="match status" value="1"/>
</dbReference>
<dbReference type="PANTHER" id="PTHR35794">
    <property type="entry name" value="CELL DIVISION PROTEIN DIVIVA"/>
    <property type="match status" value="1"/>
</dbReference>
<dbReference type="Pfam" id="PF05103">
    <property type="entry name" value="DivIVA"/>
    <property type="match status" value="1"/>
</dbReference>
<dbReference type="PIRSF" id="PIRSF029938">
    <property type="entry name" value="UCP029938"/>
    <property type="match status" value="1"/>
</dbReference>
<feature type="chain" id="PRO_0000337929" description="Cell cycle protein GpsB">
    <location>
        <begin position="1"/>
        <end position="106"/>
    </location>
</feature>
<feature type="region of interest" description="Disordered" evidence="2">
    <location>
        <begin position="55"/>
        <end position="83"/>
    </location>
</feature>
<feature type="coiled-coil region" evidence="1">
    <location>
        <begin position="34"/>
        <end position="67"/>
    </location>
</feature>
<feature type="compositionally biased region" description="Low complexity" evidence="2">
    <location>
        <begin position="70"/>
        <end position="79"/>
    </location>
</feature>
<keyword id="KW-0131">Cell cycle</keyword>
<keyword id="KW-0132">Cell division</keyword>
<keyword id="KW-0133">Cell shape</keyword>
<keyword id="KW-0175">Coiled coil</keyword>
<keyword id="KW-0963">Cytoplasm</keyword>
<keyword id="KW-1185">Reference proteome</keyword>
<reference key="1">
    <citation type="journal article" date="2002" name="Nucleic Acids Res.">
        <title>Genome sequence of Oceanobacillus iheyensis isolated from the Iheya Ridge and its unexpected adaptive capabilities to extreme environments.</title>
        <authorList>
            <person name="Takami H."/>
            <person name="Takaki Y."/>
            <person name="Uchiyama I."/>
        </authorList>
    </citation>
    <scope>NUCLEOTIDE SEQUENCE [LARGE SCALE GENOMIC DNA]</scope>
    <source>
        <strain>DSM 14371 / CIP 107618 / JCM 11309 / KCTC 3954 / HTE831</strain>
    </source>
</reference>
<comment type="function">
    <text evidence="1">Divisome component that associates with the complex late in its assembly, after the Z-ring is formed, and is dependent on DivIC and PBP2B for its recruitment to the divisome. Together with EzrA, is a key component of the system that regulates PBP1 localization during cell cycle progression. Its main role could be the removal of PBP1 from the cell pole after pole maturation is completed. Also contributes to the recruitment of PBP1 to the division complex. Not essential for septum formation.</text>
</comment>
<comment type="subunit">
    <text evidence="1">Forms polymers through the coiled coil domains. Interacts with PBP1, MreC and EzrA.</text>
</comment>
<comment type="subcellular location">
    <subcellularLocation>
        <location evidence="1">Cytoplasm</location>
    </subcellularLocation>
    <text evidence="1">Shuttles between the lateral wall and the division site in a cell cycle-dependent manner.</text>
</comment>
<comment type="similarity">
    <text evidence="1">Belongs to the GpsB family.</text>
</comment>
<sequence>MSVNRIQLSGKDILEKDFKTGIRGYSQEEVDEFLDVIIQDYDNFKQEIDRLKAENEKLKKSTPAVEQSRSRSQQPPTSQVNYDVLKRLSNLEKAVFGKRYTEQEES</sequence>
<accession>Q8EQF0</accession>
<proteinExistence type="inferred from homology"/>
<evidence type="ECO:0000255" key="1">
    <source>
        <dbReference type="HAMAP-Rule" id="MF_02011"/>
    </source>
</evidence>
<evidence type="ECO:0000256" key="2">
    <source>
        <dbReference type="SAM" id="MobiDB-lite"/>
    </source>
</evidence>